<feature type="chain" id="PRO_0000346339" description="Methylenetetrahydrofolate--tRNA-(uracil-5-)-methyltransferase TrmFO">
    <location>
        <begin position="1"/>
        <end position="434"/>
    </location>
</feature>
<feature type="binding site" evidence="1">
    <location>
        <begin position="8"/>
        <end position="13"/>
    </location>
    <ligand>
        <name>FAD</name>
        <dbReference type="ChEBI" id="CHEBI:57692"/>
    </ligand>
</feature>
<accession>B1YIB2</accession>
<reference key="1">
    <citation type="submission" date="2008-04" db="EMBL/GenBank/DDBJ databases">
        <title>Complete sequence of chromosome of Exiguobacterium sibiricum 255-15.</title>
        <authorList>
            <consortium name="US DOE Joint Genome Institute"/>
            <person name="Copeland A."/>
            <person name="Lucas S."/>
            <person name="Lapidus A."/>
            <person name="Glavina del Rio T."/>
            <person name="Dalin E."/>
            <person name="Tice H."/>
            <person name="Bruce D."/>
            <person name="Goodwin L."/>
            <person name="Pitluck S."/>
            <person name="Kiss H."/>
            <person name="Chertkov O."/>
            <person name="Monk C."/>
            <person name="Brettin T."/>
            <person name="Detter J.C."/>
            <person name="Han C."/>
            <person name="Kuske C.R."/>
            <person name="Schmutz J."/>
            <person name="Larimer F."/>
            <person name="Land M."/>
            <person name="Hauser L."/>
            <person name="Kyrpides N."/>
            <person name="Mikhailova N."/>
            <person name="Vishnivetskaya T."/>
            <person name="Rodrigues D.F."/>
            <person name="Gilichinsky D."/>
            <person name="Tiedje J."/>
            <person name="Richardson P."/>
        </authorList>
    </citation>
    <scope>NUCLEOTIDE SEQUENCE [LARGE SCALE GENOMIC DNA]</scope>
    <source>
        <strain>DSM 17290 / CCUG 55495 / CIP 109462 / JCM 13490 / 255-15</strain>
    </source>
</reference>
<evidence type="ECO:0000255" key="1">
    <source>
        <dbReference type="HAMAP-Rule" id="MF_01037"/>
    </source>
</evidence>
<protein>
    <recommendedName>
        <fullName evidence="1">Methylenetetrahydrofolate--tRNA-(uracil-5-)-methyltransferase TrmFO</fullName>
        <ecNumber evidence="1">2.1.1.74</ecNumber>
    </recommendedName>
    <alternativeName>
        <fullName evidence="1">Folate-dependent tRNA (uracil-5-)-methyltransferase</fullName>
    </alternativeName>
    <alternativeName>
        <fullName evidence="1">Folate-dependent tRNA(M-5-U54)-methyltransferase</fullName>
    </alternativeName>
</protein>
<comment type="function">
    <text evidence="1">Catalyzes the folate-dependent formation of 5-methyl-uridine at position 54 (M-5-U54) in all tRNAs.</text>
</comment>
<comment type="catalytic activity">
    <reaction evidence="1">
        <text>uridine(54) in tRNA + (6R)-5,10-methylene-5,6,7,8-tetrahydrofolate + NADH + H(+) = 5-methyluridine(54) in tRNA + (6S)-5,6,7,8-tetrahydrofolate + NAD(+)</text>
        <dbReference type="Rhea" id="RHEA:16873"/>
        <dbReference type="Rhea" id="RHEA-COMP:10167"/>
        <dbReference type="Rhea" id="RHEA-COMP:10193"/>
        <dbReference type="ChEBI" id="CHEBI:15378"/>
        <dbReference type="ChEBI" id="CHEBI:15636"/>
        <dbReference type="ChEBI" id="CHEBI:57453"/>
        <dbReference type="ChEBI" id="CHEBI:57540"/>
        <dbReference type="ChEBI" id="CHEBI:57945"/>
        <dbReference type="ChEBI" id="CHEBI:65315"/>
        <dbReference type="ChEBI" id="CHEBI:74447"/>
        <dbReference type="EC" id="2.1.1.74"/>
    </reaction>
</comment>
<comment type="catalytic activity">
    <reaction evidence="1">
        <text>uridine(54) in tRNA + (6R)-5,10-methylene-5,6,7,8-tetrahydrofolate + NADPH + H(+) = 5-methyluridine(54) in tRNA + (6S)-5,6,7,8-tetrahydrofolate + NADP(+)</text>
        <dbReference type="Rhea" id="RHEA:62372"/>
        <dbReference type="Rhea" id="RHEA-COMP:10167"/>
        <dbReference type="Rhea" id="RHEA-COMP:10193"/>
        <dbReference type="ChEBI" id="CHEBI:15378"/>
        <dbReference type="ChEBI" id="CHEBI:15636"/>
        <dbReference type="ChEBI" id="CHEBI:57453"/>
        <dbReference type="ChEBI" id="CHEBI:57783"/>
        <dbReference type="ChEBI" id="CHEBI:58349"/>
        <dbReference type="ChEBI" id="CHEBI:65315"/>
        <dbReference type="ChEBI" id="CHEBI:74447"/>
        <dbReference type="EC" id="2.1.1.74"/>
    </reaction>
</comment>
<comment type="cofactor">
    <cofactor evidence="1">
        <name>FAD</name>
        <dbReference type="ChEBI" id="CHEBI:57692"/>
    </cofactor>
</comment>
<comment type="subcellular location">
    <subcellularLocation>
        <location evidence="1">Cytoplasm</location>
    </subcellularLocation>
</comment>
<comment type="similarity">
    <text evidence="1">Belongs to the MnmG family. TrmFO subfamily.</text>
</comment>
<organism>
    <name type="scientific">Exiguobacterium sibiricum (strain DSM 17290 / CCUG 55495 / CIP 109462 / JCM 13490 / 255-15)</name>
    <dbReference type="NCBI Taxonomy" id="262543"/>
    <lineage>
        <taxon>Bacteria</taxon>
        <taxon>Bacillati</taxon>
        <taxon>Bacillota</taxon>
        <taxon>Bacilli</taxon>
        <taxon>Bacillales</taxon>
        <taxon>Bacillales Family XII. Incertae Sedis</taxon>
        <taxon>Exiguobacterium</taxon>
    </lineage>
</organism>
<gene>
    <name evidence="1" type="primary">trmFO</name>
    <name type="ordered locus">Exig_1887</name>
</gene>
<name>TRMFO_EXIS2</name>
<dbReference type="EC" id="2.1.1.74" evidence="1"/>
<dbReference type="EMBL" id="CP001022">
    <property type="protein sequence ID" value="ACB61339.1"/>
    <property type="molecule type" value="Genomic_DNA"/>
</dbReference>
<dbReference type="RefSeq" id="WP_012370757.1">
    <property type="nucleotide sequence ID" value="NC_010556.1"/>
</dbReference>
<dbReference type="SMR" id="B1YIB2"/>
<dbReference type="STRING" id="262543.Exig_1887"/>
<dbReference type="KEGG" id="esi:Exig_1887"/>
<dbReference type="eggNOG" id="COG1206">
    <property type="taxonomic scope" value="Bacteria"/>
</dbReference>
<dbReference type="HOGENOM" id="CLU_033057_1_0_9"/>
<dbReference type="OrthoDB" id="9803114at2"/>
<dbReference type="Proteomes" id="UP000001681">
    <property type="component" value="Chromosome"/>
</dbReference>
<dbReference type="GO" id="GO:0005829">
    <property type="term" value="C:cytosol"/>
    <property type="evidence" value="ECO:0007669"/>
    <property type="project" value="TreeGrafter"/>
</dbReference>
<dbReference type="GO" id="GO:0050660">
    <property type="term" value="F:flavin adenine dinucleotide binding"/>
    <property type="evidence" value="ECO:0007669"/>
    <property type="project" value="UniProtKB-UniRule"/>
</dbReference>
<dbReference type="GO" id="GO:0047151">
    <property type="term" value="F:tRNA (uracil(54)-C5)-methyltransferase activity, 5,10-methylenetetrahydrofolate-dependent"/>
    <property type="evidence" value="ECO:0007669"/>
    <property type="project" value="UniProtKB-UniRule"/>
</dbReference>
<dbReference type="GO" id="GO:0030488">
    <property type="term" value="P:tRNA methylation"/>
    <property type="evidence" value="ECO:0007669"/>
    <property type="project" value="TreeGrafter"/>
</dbReference>
<dbReference type="GO" id="GO:0002098">
    <property type="term" value="P:tRNA wobble uridine modification"/>
    <property type="evidence" value="ECO:0007669"/>
    <property type="project" value="TreeGrafter"/>
</dbReference>
<dbReference type="FunFam" id="3.50.50.60:FF:000035">
    <property type="entry name" value="Methylenetetrahydrofolate--tRNA-(uracil-5-)-methyltransferase TrmFO"/>
    <property type="match status" value="1"/>
</dbReference>
<dbReference type="FunFam" id="3.50.50.60:FF:000040">
    <property type="entry name" value="Methylenetetrahydrofolate--tRNA-(uracil-5-)-methyltransferase TrmFO"/>
    <property type="match status" value="1"/>
</dbReference>
<dbReference type="Gene3D" id="3.50.50.60">
    <property type="entry name" value="FAD/NAD(P)-binding domain"/>
    <property type="match status" value="2"/>
</dbReference>
<dbReference type="HAMAP" id="MF_01037">
    <property type="entry name" value="TrmFO"/>
    <property type="match status" value="1"/>
</dbReference>
<dbReference type="InterPro" id="IPR036188">
    <property type="entry name" value="FAD/NAD-bd_sf"/>
</dbReference>
<dbReference type="InterPro" id="IPR002218">
    <property type="entry name" value="MnmG-rel"/>
</dbReference>
<dbReference type="InterPro" id="IPR040131">
    <property type="entry name" value="MnmG_N"/>
</dbReference>
<dbReference type="InterPro" id="IPR004417">
    <property type="entry name" value="TrmFO"/>
</dbReference>
<dbReference type="NCBIfam" id="TIGR00137">
    <property type="entry name" value="gid_trmFO"/>
    <property type="match status" value="1"/>
</dbReference>
<dbReference type="NCBIfam" id="NF003739">
    <property type="entry name" value="PRK05335.1"/>
    <property type="match status" value="1"/>
</dbReference>
<dbReference type="PANTHER" id="PTHR11806">
    <property type="entry name" value="GLUCOSE INHIBITED DIVISION PROTEIN A"/>
    <property type="match status" value="1"/>
</dbReference>
<dbReference type="PANTHER" id="PTHR11806:SF2">
    <property type="entry name" value="METHYLENETETRAHYDROFOLATE--TRNA-(URACIL-5-)-METHYLTRANSFERASE TRMFO"/>
    <property type="match status" value="1"/>
</dbReference>
<dbReference type="Pfam" id="PF01134">
    <property type="entry name" value="GIDA"/>
    <property type="match status" value="1"/>
</dbReference>
<dbReference type="SUPFAM" id="SSF51905">
    <property type="entry name" value="FAD/NAD(P)-binding domain"/>
    <property type="match status" value="1"/>
</dbReference>
<sequence>MKRVTVIGAGLAGSEAAWQLAKRGVQVDLYEMRPVKQTPAHHTDQFAELVCSNSLRANQLTNAVGVLKEEMRQLDSLIMKAADLASVPAGGALAVDRHDFAGYVTETLKNHPNVTVHHEELEAIPEGPTIVATGPLTSAALSESLKQFTGEDYLYFFDAAAPILDGDTIDRDKVYLKSRYDKGEAAYLNCPMTEEEFTHFHNELIKAEVVPLKEFEKEIYFEGCMPFEVLASRGPKTLLFGPMKPVGLEDPKTGKRPYAVVQLRQDNSAGTLFNLVGFQTHLKWGEQKRIIRLIPGLENAEIVRYGVMHRNTFVNSPNLLQPTYQTRTRHDLFFAGQMTGVEGYVESAASGLTAGINAARLVNEAEPVAFPKETMMGAMAHYITTTEGKNFQPMNANFGLVPGLVGQTGRMKKPEKYALLAERALEAIKDFTDM</sequence>
<keyword id="KW-0963">Cytoplasm</keyword>
<keyword id="KW-0274">FAD</keyword>
<keyword id="KW-0285">Flavoprotein</keyword>
<keyword id="KW-0489">Methyltransferase</keyword>
<keyword id="KW-0520">NAD</keyword>
<keyword id="KW-0521">NADP</keyword>
<keyword id="KW-1185">Reference proteome</keyword>
<keyword id="KW-0808">Transferase</keyword>
<keyword id="KW-0819">tRNA processing</keyword>
<proteinExistence type="inferred from homology"/>